<proteinExistence type="inferred from homology"/>
<evidence type="ECO:0000250" key="1">
    <source>
        <dbReference type="UniProtKB" id="P03803"/>
    </source>
</evidence>
<evidence type="ECO:0000255" key="2"/>
<evidence type="ECO:0000305" key="3"/>
<comment type="function">
    <text evidence="1">Component of the spanin complex that disrupts the host outer membrane and participates in cell lysis during virus exit. The spanin complex conducts the final step in host lysis by disrupting the outer membrane after holin and endolysin action have permeabilized the inner membrane and degraded the host peptidoglycans. Host outer membrane disruption is possibly due to local fusion between the inner and outer membrane performed by the spanin complex.</text>
</comment>
<comment type="subunit">
    <text evidence="1">Interacts (via C-terminus) with the spanin outer lipoprotein subunit (o-spanin) (via C-terminus). Part of the spanin complex which spans the entire periplasmic space. The spanin complex is composed of spanin inner membrane subunit and spanin outer membrane subunit.</text>
</comment>
<comment type="subcellular location">
    <subcellularLocation>
        <location evidence="1">Host cell inner membrane</location>
        <topology evidence="1">Single-pass type II membrane protein</topology>
        <orientation evidence="1">Periplasmic side</orientation>
    </subcellularLocation>
</comment>
<comment type="similarity">
    <text evidence="3">Belongs to the T7likevirus i-spanin family.</text>
</comment>
<sequence length="147" mass="16911">MLEFLRKLIPWVLAGMLFGLGWHLGSDSMDAKWKQEVHNEYVKRVEATASTQRAINEISAKYQEDLAALEGSTDRIISDLRQDNKRLRVRVKPTGTSEGQCGFEPDDRAELDDRDAKRILSVTQKGDAWIRALQDTIRELQRKQEIK</sequence>
<name>SPAN1_BPT3</name>
<protein>
    <recommendedName>
        <fullName evidence="1">Spanin, inner membrane subunit</fullName>
        <shortName>i-spanin</shortName>
    </recommendedName>
    <alternativeName>
        <fullName>Gene product 18.5</fullName>
        <shortName>Gp18.5</shortName>
    </alternativeName>
</protein>
<gene>
    <name type="primary">18.5</name>
</gene>
<dbReference type="EMBL" id="M14784">
    <property type="protein sequence ID" value="AAA92526.1"/>
    <property type="molecule type" value="Genomic_DNA"/>
</dbReference>
<dbReference type="PIR" id="D23476">
    <property type="entry name" value="Q8BPT3"/>
</dbReference>
<dbReference type="SMR" id="P10305"/>
<dbReference type="MEROPS" id="X19.002"/>
<dbReference type="GO" id="GO:0020002">
    <property type="term" value="C:host cell plasma membrane"/>
    <property type="evidence" value="ECO:0007669"/>
    <property type="project" value="UniProtKB-SubCell"/>
</dbReference>
<dbReference type="GO" id="GO:0016020">
    <property type="term" value="C:membrane"/>
    <property type="evidence" value="ECO:0007669"/>
    <property type="project" value="UniProtKB-KW"/>
</dbReference>
<dbReference type="GO" id="GO:0044659">
    <property type="term" value="P:viral release from host cell by cytolysis"/>
    <property type="evidence" value="ECO:0007669"/>
    <property type="project" value="InterPro"/>
</dbReference>
<dbReference type="InterPro" id="IPR004929">
    <property type="entry name" value="I-spanin"/>
</dbReference>
<dbReference type="InterPro" id="IPR016417">
    <property type="entry name" value="I-spanin_T7likevirus"/>
</dbReference>
<dbReference type="Pfam" id="PF03245">
    <property type="entry name" value="Phage_lysis"/>
    <property type="match status" value="1"/>
</dbReference>
<dbReference type="PIRSF" id="PIRSF004485">
    <property type="entry name" value="T7_18-5_prd"/>
    <property type="match status" value="1"/>
</dbReference>
<keyword id="KW-0204">Cytolysis</keyword>
<keyword id="KW-1030">Host cell inner membrane</keyword>
<keyword id="KW-0578">Host cell lysis by virus</keyword>
<keyword id="KW-1032">Host cell membrane</keyword>
<keyword id="KW-1043">Host membrane</keyword>
<keyword id="KW-0472">Membrane</keyword>
<keyword id="KW-0735">Signal-anchor</keyword>
<keyword id="KW-0812">Transmembrane</keyword>
<keyword id="KW-1133">Transmembrane helix</keyword>
<keyword id="KW-1188">Viral release from host cell</keyword>
<reference key="1">
    <citation type="journal article" date="1986" name="Virology">
        <title>Cloning and sequencing of the genetic right end of bacteriophage T3 DNA.</title>
        <authorList>
            <person name="Yamada M."/>
            <person name="Fujisawa H."/>
            <person name="Kato H."/>
            <person name="Hamada K."/>
            <person name="Minagawa T."/>
        </authorList>
    </citation>
    <scope>NUCLEOTIDE SEQUENCE [GENOMIC DNA]</scope>
</reference>
<reference key="2">
    <citation type="journal article" date="1986" name="Virology">
        <authorList>
            <person name="Yamada M."/>
            <person name="Fujisawa H."/>
            <person name="Kato H."/>
            <person name="Hamada K."/>
            <person name="Minagawa T."/>
        </authorList>
    </citation>
    <scope>ERRATUM OF PUBMED:3010556</scope>
</reference>
<organismHost>
    <name type="scientific">Escherichia coli</name>
    <dbReference type="NCBI Taxonomy" id="562"/>
</organismHost>
<accession>P10305</accession>
<feature type="chain" id="PRO_0000106536" description="Spanin, inner membrane subunit">
    <location>
        <begin position="1"/>
        <end position="147"/>
    </location>
</feature>
<feature type="topological domain" description="Cytoplasmic" evidence="1">
    <location>
        <begin position="1"/>
        <end position="7"/>
    </location>
</feature>
<feature type="transmembrane region" description="Helical; Signal-anchor for type II membrane protein" evidence="2">
    <location>
        <begin position="8"/>
        <end position="24"/>
    </location>
</feature>
<feature type="topological domain" description="Periplasmic" evidence="1">
    <location>
        <begin position="25"/>
        <end position="143"/>
    </location>
</feature>
<organism>
    <name type="scientific">Enterobacteria phage T3</name>
    <name type="common">Bacteriophage T3</name>
    <dbReference type="NCBI Taxonomy" id="10759"/>
    <lineage>
        <taxon>Viruses</taxon>
        <taxon>Duplodnaviria</taxon>
        <taxon>Heunggongvirae</taxon>
        <taxon>Uroviricota</taxon>
        <taxon>Caudoviricetes</taxon>
        <taxon>Autographiviridae</taxon>
        <taxon>Studiervirinae</taxon>
        <taxon>Teetrevirus</taxon>
        <taxon>Teetrevirus T3</taxon>
    </lineage>
</organism>